<reference key="1">
    <citation type="submission" date="2003-10" db="EMBL/GenBank/DDBJ databases">
        <authorList>
            <consortium name="NIH - Zebrafish Gene Collection (ZGC) project"/>
        </authorList>
    </citation>
    <scope>NUCLEOTIDE SEQUENCE [LARGE SCALE MRNA]</scope>
    <source>
        <tissue>Eye</tissue>
    </source>
</reference>
<evidence type="ECO:0000250" key="1">
    <source>
        <dbReference type="UniProtKB" id="P61165"/>
    </source>
</evidence>
<evidence type="ECO:0000255" key="2"/>
<evidence type="ECO:0000305" key="3"/>
<keyword id="KW-0963">Cytoplasm</keyword>
<keyword id="KW-0256">Endoplasmic reticulum</keyword>
<keyword id="KW-0472">Membrane</keyword>
<keyword id="KW-1185">Reference proteome</keyword>
<keyword id="KW-0812">Transmembrane</keyword>
<keyword id="KW-1133">Transmembrane helix</keyword>
<name>TM258_DANRE</name>
<dbReference type="EMBL" id="BC059600">
    <property type="protein sequence ID" value="AAH59600.1"/>
    <property type="molecule type" value="mRNA"/>
</dbReference>
<dbReference type="RefSeq" id="NP_957063.1">
    <property type="nucleotide sequence ID" value="NM_200769.3"/>
</dbReference>
<dbReference type="SMR" id="Q6PBS6"/>
<dbReference type="FunCoup" id="Q6PBS6">
    <property type="interactions" value="1153"/>
</dbReference>
<dbReference type="STRING" id="7955.ENSDARP00000043171"/>
<dbReference type="PaxDb" id="7955-ENSDARP00000043171"/>
<dbReference type="Ensembl" id="ENSDART00000043172">
    <property type="protein sequence ID" value="ENSDARP00000043171"/>
    <property type="gene ID" value="ENSDARG00000078785"/>
</dbReference>
<dbReference type="GeneID" id="393742"/>
<dbReference type="KEGG" id="dre:393742"/>
<dbReference type="AGR" id="ZFIN:ZDB-GENE-040426-1739"/>
<dbReference type="CTD" id="746"/>
<dbReference type="ZFIN" id="ZDB-GENE-040426-1739">
    <property type="gene designation" value="tmem258"/>
</dbReference>
<dbReference type="eggNOG" id="KOG4452">
    <property type="taxonomic scope" value="Eukaryota"/>
</dbReference>
<dbReference type="HOGENOM" id="CLU_180449_0_0_1"/>
<dbReference type="InParanoid" id="Q6PBS6"/>
<dbReference type="OMA" id="MERYVGP"/>
<dbReference type="OrthoDB" id="18408at2759"/>
<dbReference type="PhylomeDB" id="Q6PBS6"/>
<dbReference type="TreeFam" id="TF300295"/>
<dbReference type="UniPathway" id="UPA00378"/>
<dbReference type="PRO" id="PR:Q6PBS6"/>
<dbReference type="Proteomes" id="UP000000437">
    <property type="component" value="Chromosome 25"/>
</dbReference>
<dbReference type="Bgee" id="ENSDARG00000078785">
    <property type="expression patterns" value="Expressed in intestine and 27 other cell types or tissues"/>
</dbReference>
<dbReference type="GO" id="GO:0005737">
    <property type="term" value="C:cytoplasm"/>
    <property type="evidence" value="ECO:0000250"/>
    <property type="project" value="UniProtKB"/>
</dbReference>
<dbReference type="GO" id="GO:0005789">
    <property type="term" value="C:endoplasmic reticulum membrane"/>
    <property type="evidence" value="ECO:0000318"/>
    <property type="project" value="GO_Central"/>
</dbReference>
<dbReference type="GO" id="GO:0016020">
    <property type="term" value="C:membrane"/>
    <property type="evidence" value="ECO:0000250"/>
    <property type="project" value="UniProtKB"/>
</dbReference>
<dbReference type="GO" id="GO:0008250">
    <property type="term" value="C:oligosaccharyltransferase complex"/>
    <property type="evidence" value="ECO:0007669"/>
    <property type="project" value="InterPro"/>
</dbReference>
<dbReference type="GO" id="GO:0062062">
    <property type="term" value="F:oligosaccharyltransferase complex binding"/>
    <property type="evidence" value="ECO:0000318"/>
    <property type="project" value="GO_Central"/>
</dbReference>
<dbReference type="GO" id="GO:0006486">
    <property type="term" value="P:protein glycosylation"/>
    <property type="evidence" value="ECO:0007669"/>
    <property type="project" value="UniProtKB-UniPathway"/>
</dbReference>
<dbReference type="GO" id="GO:0034976">
    <property type="term" value="P:response to endoplasmic reticulum stress"/>
    <property type="evidence" value="ECO:0000318"/>
    <property type="project" value="GO_Central"/>
</dbReference>
<dbReference type="InterPro" id="IPR007915">
    <property type="entry name" value="TMEM258/Ost5"/>
</dbReference>
<dbReference type="PANTHER" id="PTHR13636">
    <property type="entry name" value="TRANSMEMBRANE PROTEIN 258"/>
    <property type="match status" value="1"/>
</dbReference>
<dbReference type="Pfam" id="PF05251">
    <property type="entry name" value="Ost5"/>
    <property type="match status" value="1"/>
</dbReference>
<proteinExistence type="inferred from homology"/>
<comment type="function">
    <text evidence="1">Subunit of the oligosaccharyl transferase (OST) complex that catalyzes the initial transfer of a defined glycan (Glc(3)Man(9)GlcNAc(2) in eukaryotes) from the lipid carrier dolichol-pyrophosphate to an asparagine residue within an Asn-X-Ser/Thr consensus motif in nascent polypeptide chains, the first step in protein N-glycosylation. N-glycosylation occurs cotranslationally and the complex associates with the Sec61 complex at the channel-forming translocon complex that mediates protein translocation across the endoplasmic reticulum (ER). All subunits are required for a maximal enzyme activity.</text>
</comment>
<comment type="pathway">
    <text evidence="1">Protein modification; protein glycosylation.</text>
</comment>
<comment type="subunit">
    <text evidence="1">Component of the oligosaccharyltransferase (OST) complex.</text>
</comment>
<comment type="subcellular location">
    <subcellularLocation>
        <location evidence="1">Membrane</location>
        <topology evidence="1">Multi-pass membrane protein</topology>
    </subcellularLocation>
    <subcellularLocation>
        <location evidence="1">Endoplasmic reticulum</location>
    </subcellularLocation>
    <subcellularLocation>
        <location evidence="1">Cytoplasm</location>
    </subcellularLocation>
</comment>
<comment type="similarity">
    <text evidence="3">Belongs to the OST5 family.</text>
</comment>
<protein>
    <recommendedName>
        <fullName>Dolichyl-diphosphooligosaccharide--protein glycosyltransferase subunit TMEM258</fullName>
        <shortName>Oligosaccharyl transferase subunit TMEM258</shortName>
    </recommendedName>
    <alternativeName>
        <fullName evidence="1">Transmembrane protein 258</fullName>
    </alternativeName>
</protein>
<gene>
    <name evidence="1" type="primary">tmem258</name>
    <name type="ORF">zgc:73269</name>
</gene>
<accession>Q6PBS6</accession>
<feature type="chain" id="PRO_0000235833" description="Dolichyl-diphosphooligosaccharide--protein glycosyltransferase subunit TMEM258">
    <location>
        <begin position="1"/>
        <end position="79"/>
    </location>
</feature>
<feature type="transmembrane region" description="Helical" evidence="2">
    <location>
        <begin position="17"/>
        <end position="37"/>
    </location>
</feature>
<feature type="transmembrane region" description="Helical" evidence="2">
    <location>
        <begin position="59"/>
        <end position="79"/>
    </location>
</feature>
<organism>
    <name type="scientific">Danio rerio</name>
    <name type="common">Zebrafish</name>
    <name type="synonym">Brachydanio rerio</name>
    <dbReference type="NCBI Taxonomy" id="7955"/>
    <lineage>
        <taxon>Eukaryota</taxon>
        <taxon>Metazoa</taxon>
        <taxon>Chordata</taxon>
        <taxon>Craniata</taxon>
        <taxon>Vertebrata</taxon>
        <taxon>Euteleostomi</taxon>
        <taxon>Actinopterygii</taxon>
        <taxon>Neopterygii</taxon>
        <taxon>Teleostei</taxon>
        <taxon>Ostariophysi</taxon>
        <taxon>Cypriniformes</taxon>
        <taxon>Danionidae</taxon>
        <taxon>Danioninae</taxon>
        <taxon>Danio</taxon>
    </lineage>
</organism>
<sequence>MELEAMTRYTSPVNPAVFPHLTVVLLAIGMFFKAWFFVYEVTSTKYTRDVYKELLIALVASLFMGFGVHFLLLWVGIFV</sequence>